<feature type="chain" id="PRO_1000020339" description="Threonine--tRNA ligase">
    <location>
        <begin position="1"/>
        <end position="641"/>
    </location>
</feature>
<feature type="domain" description="TGS" evidence="2">
    <location>
        <begin position="1"/>
        <end position="61"/>
    </location>
</feature>
<feature type="region of interest" description="Catalytic" evidence="1">
    <location>
        <begin position="240"/>
        <end position="538"/>
    </location>
</feature>
<feature type="binding site" evidence="1">
    <location>
        <position position="334"/>
    </location>
    <ligand>
        <name>Zn(2+)</name>
        <dbReference type="ChEBI" id="CHEBI:29105"/>
    </ligand>
</feature>
<feature type="binding site" evidence="1">
    <location>
        <position position="385"/>
    </location>
    <ligand>
        <name>Zn(2+)</name>
        <dbReference type="ChEBI" id="CHEBI:29105"/>
    </ligand>
</feature>
<feature type="binding site" evidence="1">
    <location>
        <position position="515"/>
    </location>
    <ligand>
        <name>Zn(2+)</name>
        <dbReference type="ChEBI" id="CHEBI:29105"/>
    </ligand>
</feature>
<organism>
    <name type="scientific">Aster yellows witches'-broom phytoplasma (strain AYWB)</name>
    <dbReference type="NCBI Taxonomy" id="322098"/>
    <lineage>
        <taxon>Bacteria</taxon>
        <taxon>Bacillati</taxon>
        <taxon>Mycoplasmatota</taxon>
        <taxon>Mollicutes</taxon>
        <taxon>Acholeplasmatales</taxon>
        <taxon>Acholeplasmataceae</taxon>
        <taxon>Candidatus Phytoplasma</taxon>
        <taxon>16SrI (Aster yellows group)</taxon>
    </lineage>
</organism>
<keyword id="KW-0030">Aminoacyl-tRNA synthetase</keyword>
<keyword id="KW-0067">ATP-binding</keyword>
<keyword id="KW-0963">Cytoplasm</keyword>
<keyword id="KW-0436">Ligase</keyword>
<keyword id="KW-0479">Metal-binding</keyword>
<keyword id="KW-0547">Nucleotide-binding</keyword>
<keyword id="KW-0648">Protein biosynthesis</keyword>
<keyword id="KW-0694">RNA-binding</keyword>
<keyword id="KW-0820">tRNA-binding</keyword>
<keyword id="KW-0862">Zinc</keyword>
<protein>
    <recommendedName>
        <fullName evidence="1">Threonine--tRNA ligase</fullName>
        <ecNumber evidence="1">6.1.1.3</ecNumber>
    </recommendedName>
    <alternativeName>
        <fullName evidence="1">Threonyl-tRNA synthetase</fullName>
        <shortName evidence="1">ThrRS</shortName>
    </alternativeName>
</protein>
<proteinExistence type="inferred from homology"/>
<dbReference type="EC" id="6.1.1.3" evidence="1"/>
<dbReference type="EMBL" id="CP000061">
    <property type="protein sequence ID" value="ABC65780.1"/>
    <property type="molecule type" value="Genomic_DNA"/>
</dbReference>
<dbReference type="RefSeq" id="WP_011412941.1">
    <property type="nucleotide sequence ID" value="NC_007716.1"/>
</dbReference>
<dbReference type="SMR" id="Q2NIG3"/>
<dbReference type="STRING" id="322098.AYWB_663"/>
<dbReference type="KEGG" id="ayw:AYWB_663"/>
<dbReference type="eggNOG" id="COG0441">
    <property type="taxonomic scope" value="Bacteria"/>
</dbReference>
<dbReference type="HOGENOM" id="CLU_008554_0_1_14"/>
<dbReference type="OrthoDB" id="9802304at2"/>
<dbReference type="PhylomeDB" id="Q2NIG3"/>
<dbReference type="Proteomes" id="UP000001934">
    <property type="component" value="Chromosome"/>
</dbReference>
<dbReference type="GO" id="GO:0005737">
    <property type="term" value="C:cytoplasm"/>
    <property type="evidence" value="ECO:0007669"/>
    <property type="project" value="UniProtKB-SubCell"/>
</dbReference>
<dbReference type="GO" id="GO:0005524">
    <property type="term" value="F:ATP binding"/>
    <property type="evidence" value="ECO:0007669"/>
    <property type="project" value="UniProtKB-UniRule"/>
</dbReference>
<dbReference type="GO" id="GO:0046872">
    <property type="term" value="F:metal ion binding"/>
    <property type="evidence" value="ECO:0007669"/>
    <property type="project" value="UniProtKB-KW"/>
</dbReference>
<dbReference type="GO" id="GO:0004829">
    <property type="term" value="F:threonine-tRNA ligase activity"/>
    <property type="evidence" value="ECO:0007669"/>
    <property type="project" value="UniProtKB-UniRule"/>
</dbReference>
<dbReference type="GO" id="GO:0000049">
    <property type="term" value="F:tRNA binding"/>
    <property type="evidence" value="ECO:0007669"/>
    <property type="project" value="UniProtKB-KW"/>
</dbReference>
<dbReference type="GO" id="GO:0006435">
    <property type="term" value="P:threonyl-tRNA aminoacylation"/>
    <property type="evidence" value="ECO:0007669"/>
    <property type="project" value="UniProtKB-UniRule"/>
</dbReference>
<dbReference type="CDD" id="cd01667">
    <property type="entry name" value="TGS_ThrRS"/>
    <property type="match status" value="1"/>
</dbReference>
<dbReference type="CDD" id="cd00860">
    <property type="entry name" value="ThrRS_anticodon"/>
    <property type="match status" value="1"/>
</dbReference>
<dbReference type="CDD" id="cd00771">
    <property type="entry name" value="ThrRS_core"/>
    <property type="match status" value="1"/>
</dbReference>
<dbReference type="FunFam" id="3.30.930.10:FF:000002">
    <property type="entry name" value="Threonine--tRNA ligase"/>
    <property type="match status" value="1"/>
</dbReference>
<dbReference type="FunFam" id="3.40.50.800:FF:000001">
    <property type="entry name" value="Threonine--tRNA ligase"/>
    <property type="match status" value="1"/>
</dbReference>
<dbReference type="FunFam" id="3.30.980.10:FF:000005">
    <property type="entry name" value="Threonyl-tRNA synthetase, mitochondrial"/>
    <property type="match status" value="1"/>
</dbReference>
<dbReference type="Gene3D" id="3.10.20.30">
    <property type="match status" value="1"/>
</dbReference>
<dbReference type="Gene3D" id="3.40.50.800">
    <property type="entry name" value="Anticodon-binding domain"/>
    <property type="match status" value="1"/>
</dbReference>
<dbReference type="Gene3D" id="3.30.930.10">
    <property type="entry name" value="Bira Bifunctional Protein, Domain 2"/>
    <property type="match status" value="1"/>
</dbReference>
<dbReference type="Gene3D" id="3.30.980.10">
    <property type="entry name" value="Threonyl-trna Synthetase, Chain A, domain 2"/>
    <property type="match status" value="1"/>
</dbReference>
<dbReference type="HAMAP" id="MF_00184">
    <property type="entry name" value="Thr_tRNA_synth"/>
    <property type="match status" value="1"/>
</dbReference>
<dbReference type="InterPro" id="IPR002314">
    <property type="entry name" value="aa-tRNA-synt_IIb"/>
</dbReference>
<dbReference type="InterPro" id="IPR006195">
    <property type="entry name" value="aa-tRNA-synth_II"/>
</dbReference>
<dbReference type="InterPro" id="IPR045864">
    <property type="entry name" value="aa-tRNA-synth_II/BPL/LPL"/>
</dbReference>
<dbReference type="InterPro" id="IPR004154">
    <property type="entry name" value="Anticodon-bd"/>
</dbReference>
<dbReference type="InterPro" id="IPR036621">
    <property type="entry name" value="Anticodon-bd_dom_sf"/>
</dbReference>
<dbReference type="InterPro" id="IPR012675">
    <property type="entry name" value="Beta-grasp_dom_sf"/>
</dbReference>
<dbReference type="InterPro" id="IPR004095">
    <property type="entry name" value="TGS"/>
</dbReference>
<dbReference type="InterPro" id="IPR002320">
    <property type="entry name" value="Thr-tRNA-ligase_IIa"/>
</dbReference>
<dbReference type="InterPro" id="IPR018163">
    <property type="entry name" value="Thr/Ala-tRNA-synth_IIc_edit"/>
</dbReference>
<dbReference type="InterPro" id="IPR047246">
    <property type="entry name" value="ThrRS_anticodon"/>
</dbReference>
<dbReference type="InterPro" id="IPR033728">
    <property type="entry name" value="ThrRS_core"/>
</dbReference>
<dbReference type="InterPro" id="IPR012947">
    <property type="entry name" value="tRNA_SAD"/>
</dbReference>
<dbReference type="NCBIfam" id="TIGR00418">
    <property type="entry name" value="thrS"/>
    <property type="match status" value="1"/>
</dbReference>
<dbReference type="PANTHER" id="PTHR11451:SF56">
    <property type="entry name" value="THREONINE--TRNA LIGASE 1"/>
    <property type="match status" value="1"/>
</dbReference>
<dbReference type="PANTHER" id="PTHR11451">
    <property type="entry name" value="THREONINE-TRNA LIGASE"/>
    <property type="match status" value="1"/>
</dbReference>
<dbReference type="Pfam" id="PF03129">
    <property type="entry name" value="HGTP_anticodon"/>
    <property type="match status" value="1"/>
</dbReference>
<dbReference type="Pfam" id="PF00587">
    <property type="entry name" value="tRNA-synt_2b"/>
    <property type="match status" value="1"/>
</dbReference>
<dbReference type="Pfam" id="PF07973">
    <property type="entry name" value="tRNA_SAD"/>
    <property type="match status" value="1"/>
</dbReference>
<dbReference type="PRINTS" id="PR01047">
    <property type="entry name" value="TRNASYNTHTHR"/>
</dbReference>
<dbReference type="SMART" id="SM00863">
    <property type="entry name" value="tRNA_SAD"/>
    <property type="match status" value="1"/>
</dbReference>
<dbReference type="SUPFAM" id="SSF52954">
    <property type="entry name" value="Class II aaRS ABD-related"/>
    <property type="match status" value="1"/>
</dbReference>
<dbReference type="SUPFAM" id="SSF55681">
    <property type="entry name" value="Class II aaRS and biotin synthetases"/>
    <property type="match status" value="1"/>
</dbReference>
<dbReference type="SUPFAM" id="SSF55186">
    <property type="entry name" value="ThrRS/AlaRS common domain"/>
    <property type="match status" value="1"/>
</dbReference>
<dbReference type="PROSITE" id="PS50862">
    <property type="entry name" value="AA_TRNA_LIGASE_II"/>
    <property type="match status" value="1"/>
</dbReference>
<dbReference type="PROSITE" id="PS51880">
    <property type="entry name" value="TGS"/>
    <property type="match status" value="1"/>
</dbReference>
<reference key="1">
    <citation type="journal article" date="2006" name="J. Bacteriol.">
        <title>Living with genome instability: the adaptation of phytoplasmas to diverse environments of their insect and plant hosts.</title>
        <authorList>
            <person name="Bai X."/>
            <person name="Zhang J."/>
            <person name="Ewing A."/>
            <person name="Miller S.A."/>
            <person name="Jancso Radek A."/>
            <person name="Shevchenko D.V."/>
            <person name="Tsukerman K."/>
            <person name="Walunas T."/>
            <person name="Lapidus A."/>
            <person name="Campbell J.W."/>
            <person name="Hogenhout S.A."/>
        </authorList>
    </citation>
    <scope>NUCLEOTIDE SEQUENCE [LARGE SCALE GENOMIC DNA]</scope>
    <source>
        <strain>AYWB</strain>
    </source>
</reference>
<evidence type="ECO:0000255" key="1">
    <source>
        <dbReference type="HAMAP-Rule" id="MF_00184"/>
    </source>
</evidence>
<evidence type="ECO:0000255" key="2">
    <source>
        <dbReference type="PROSITE-ProRule" id="PRU01228"/>
    </source>
</evidence>
<gene>
    <name evidence="1" type="primary">thrS</name>
    <name type="ordered locus">AYWB_663</name>
</gene>
<comment type="function">
    <text evidence="1">Catalyzes the attachment of threonine to tRNA(Thr) in a two-step reaction: L-threonine is first activated by ATP to form Thr-AMP and then transferred to the acceptor end of tRNA(Thr). Also edits incorrectly charged L-seryl-tRNA(Thr).</text>
</comment>
<comment type="catalytic activity">
    <reaction evidence="1">
        <text>tRNA(Thr) + L-threonine + ATP = L-threonyl-tRNA(Thr) + AMP + diphosphate + H(+)</text>
        <dbReference type="Rhea" id="RHEA:24624"/>
        <dbReference type="Rhea" id="RHEA-COMP:9670"/>
        <dbReference type="Rhea" id="RHEA-COMP:9704"/>
        <dbReference type="ChEBI" id="CHEBI:15378"/>
        <dbReference type="ChEBI" id="CHEBI:30616"/>
        <dbReference type="ChEBI" id="CHEBI:33019"/>
        <dbReference type="ChEBI" id="CHEBI:57926"/>
        <dbReference type="ChEBI" id="CHEBI:78442"/>
        <dbReference type="ChEBI" id="CHEBI:78534"/>
        <dbReference type="ChEBI" id="CHEBI:456215"/>
        <dbReference type="EC" id="6.1.1.3"/>
    </reaction>
</comment>
<comment type="cofactor">
    <cofactor evidence="1">
        <name>Zn(2+)</name>
        <dbReference type="ChEBI" id="CHEBI:29105"/>
    </cofactor>
    <text evidence="1">Binds 1 zinc ion per subunit.</text>
</comment>
<comment type="subunit">
    <text evidence="1">Homodimer.</text>
</comment>
<comment type="subcellular location">
    <subcellularLocation>
        <location evidence="1">Cytoplasm</location>
    </subcellularLocation>
</comment>
<comment type="similarity">
    <text evidence="1">Belongs to the class-II aminoacyl-tRNA synthetase family.</text>
</comment>
<accession>Q2NIG3</accession>
<name>SYT_AYWBP</name>
<sequence>MIKISFFDNQIQEFISGTTPLAIWKEHLSEHFKKPVAALFNNQPIELDFPLKKNGNLEILTESDPKSLEVLNHSTAHLMAQAVARLYPDALFTVGPAIKEGFYYDIDFQKHTISEKDFLTIEKVMHQISLENHKITREEISFEKAKKLFAYNPYKQVLLEKFRDQTISIYRQGEFFDLCRGVHVIKTNLIKHFKILKISGAYFQGDAKNKTLTRIYGTSFFKKQALADYLQLLEERKERDHKKINKELDLFMFNKEVGLGLPFWLPKGATVRRIVERYIVDKELSYDYHHVYTPIMANTELYRISGHLDHYASNMFPIMSLENGEKLVLRPMNCPHHMMIYKKNPHSYKELPLRIAELGMMHRFEKSGAVSGLQRVREMTLNDAHIFARPDQIKEEIKKIINLILEVYCDFNIKNYELRLSYRNPNNTEKYFNDDQMWYNAEKTLKETIKELGLPFKEAIGEAAFYGPKLDVQVFNALGNEETLSTVQLDFLLPQKFDLTFIGEDNKHHRPVVIHRAVVSTMERFLAHLVEETKGVFPLWLAPVQVLLIPVSAPLHFEFSQKIKETLQLQNFRVEINSKDNTLGYKIREAQKLKIPYQVVIGDHEMINNLITFRKYGSHLQTTIKVDEFVSLLKDKVLQKK</sequence>